<comment type="catalytic activity">
    <reaction evidence="1">
        <text>5-dehydro-4-deoxy-D-glucarate + H(+) = 2,5-dioxopentanoate + CO2 + H2O</text>
        <dbReference type="Rhea" id="RHEA:24608"/>
        <dbReference type="ChEBI" id="CHEBI:15377"/>
        <dbReference type="ChEBI" id="CHEBI:15378"/>
        <dbReference type="ChEBI" id="CHEBI:16526"/>
        <dbReference type="ChEBI" id="CHEBI:42819"/>
        <dbReference type="ChEBI" id="CHEBI:58136"/>
        <dbReference type="EC" id="4.2.1.41"/>
    </reaction>
</comment>
<comment type="pathway">
    <text evidence="1">Carbohydrate acid metabolism; D-glucarate degradation; 2,5-dioxopentanoate from D-glucarate: step 2/2.</text>
</comment>
<comment type="similarity">
    <text evidence="1">Belongs to the DapA family.</text>
</comment>
<organism>
    <name type="scientific">Azotobacter vinelandii (strain DJ / ATCC BAA-1303)</name>
    <dbReference type="NCBI Taxonomy" id="322710"/>
    <lineage>
        <taxon>Bacteria</taxon>
        <taxon>Pseudomonadati</taxon>
        <taxon>Pseudomonadota</taxon>
        <taxon>Gammaproteobacteria</taxon>
        <taxon>Pseudomonadales</taxon>
        <taxon>Pseudomonadaceae</taxon>
        <taxon>Azotobacter</taxon>
    </lineage>
</organism>
<proteinExistence type="inferred from homology"/>
<dbReference type="EC" id="4.2.1.41" evidence="1"/>
<dbReference type="EMBL" id="CP001157">
    <property type="protein sequence ID" value="ACO76775.1"/>
    <property type="molecule type" value="Genomic_DNA"/>
</dbReference>
<dbReference type="RefSeq" id="WP_012699203.1">
    <property type="nucleotide sequence ID" value="NC_012560.1"/>
</dbReference>
<dbReference type="SMR" id="C1DJJ0"/>
<dbReference type="STRING" id="322710.Avin_05220"/>
<dbReference type="EnsemblBacteria" id="ACO76775">
    <property type="protein sequence ID" value="ACO76775"/>
    <property type="gene ID" value="Avin_05220"/>
</dbReference>
<dbReference type="GeneID" id="88183943"/>
<dbReference type="KEGG" id="avn:Avin_05220"/>
<dbReference type="eggNOG" id="COG0329">
    <property type="taxonomic scope" value="Bacteria"/>
</dbReference>
<dbReference type="HOGENOM" id="CLU_049343_5_2_6"/>
<dbReference type="OrthoDB" id="8995637at2"/>
<dbReference type="UniPathway" id="UPA00564">
    <property type="reaction ID" value="UER00628"/>
</dbReference>
<dbReference type="Proteomes" id="UP000002424">
    <property type="component" value="Chromosome"/>
</dbReference>
<dbReference type="GO" id="GO:0008840">
    <property type="term" value="F:4-hydroxy-tetrahydrodipicolinate synthase activity"/>
    <property type="evidence" value="ECO:0007669"/>
    <property type="project" value="TreeGrafter"/>
</dbReference>
<dbReference type="GO" id="GO:0047448">
    <property type="term" value="F:5-dehydro-4-deoxyglucarate dehydratase activity"/>
    <property type="evidence" value="ECO:0007669"/>
    <property type="project" value="UniProtKB-UniRule"/>
</dbReference>
<dbReference type="GO" id="GO:0042838">
    <property type="term" value="P:D-glucarate catabolic process"/>
    <property type="evidence" value="ECO:0007669"/>
    <property type="project" value="UniProtKB-UniRule"/>
</dbReference>
<dbReference type="CDD" id="cd00951">
    <property type="entry name" value="KDGDH"/>
    <property type="match status" value="1"/>
</dbReference>
<dbReference type="Gene3D" id="3.20.20.70">
    <property type="entry name" value="Aldolase class I"/>
    <property type="match status" value="1"/>
</dbReference>
<dbReference type="HAMAP" id="MF_00694">
    <property type="entry name" value="KDGDH"/>
    <property type="match status" value="1"/>
</dbReference>
<dbReference type="InterPro" id="IPR013785">
    <property type="entry name" value="Aldolase_TIM"/>
</dbReference>
<dbReference type="InterPro" id="IPR002220">
    <property type="entry name" value="DapA-like"/>
</dbReference>
<dbReference type="InterPro" id="IPR017655">
    <property type="entry name" value="Dehydro-deoxyglucarate_dehyd"/>
</dbReference>
<dbReference type="NCBIfam" id="TIGR03249">
    <property type="entry name" value="KdgD"/>
    <property type="match status" value="1"/>
</dbReference>
<dbReference type="NCBIfam" id="NF002958">
    <property type="entry name" value="PRK03620.1"/>
    <property type="match status" value="1"/>
</dbReference>
<dbReference type="PANTHER" id="PTHR12128:SF19">
    <property type="entry name" value="5-DEHYDRO-4-DEOXYGLUCARATE DEHYDRATASE 2-RELATED"/>
    <property type="match status" value="1"/>
</dbReference>
<dbReference type="PANTHER" id="PTHR12128">
    <property type="entry name" value="DIHYDRODIPICOLINATE SYNTHASE"/>
    <property type="match status" value="1"/>
</dbReference>
<dbReference type="Pfam" id="PF00701">
    <property type="entry name" value="DHDPS"/>
    <property type="match status" value="1"/>
</dbReference>
<dbReference type="PIRSF" id="PIRSF001365">
    <property type="entry name" value="DHDPS"/>
    <property type="match status" value="1"/>
</dbReference>
<dbReference type="SMART" id="SM01130">
    <property type="entry name" value="DHDPS"/>
    <property type="match status" value="1"/>
</dbReference>
<dbReference type="SUPFAM" id="SSF51569">
    <property type="entry name" value="Aldolase"/>
    <property type="match status" value="1"/>
</dbReference>
<accession>C1DJJ0</accession>
<feature type="chain" id="PRO_1000212623" description="Probable 5-dehydro-4-deoxyglucarate dehydratase">
    <location>
        <begin position="1"/>
        <end position="303"/>
    </location>
</feature>
<protein>
    <recommendedName>
        <fullName evidence="1">Probable 5-dehydro-4-deoxyglucarate dehydratase</fullName>
        <ecNumber evidence="1">4.2.1.41</ecNumber>
    </recommendedName>
    <alternativeName>
        <fullName evidence="1">5-keto-4-deoxy-glucarate dehydratase</fullName>
        <shortName evidence="1">KDGDH</shortName>
    </alternativeName>
</protein>
<reference key="1">
    <citation type="journal article" date="2009" name="J. Bacteriol.">
        <title>Genome sequence of Azotobacter vinelandii, an obligate aerobe specialized to support diverse anaerobic metabolic processes.</title>
        <authorList>
            <person name="Setubal J.C."/>
            <person name="Dos Santos P."/>
            <person name="Goldman B.S."/>
            <person name="Ertesvaag H."/>
            <person name="Espin G."/>
            <person name="Rubio L.M."/>
            <person name="Valla S."/>
            <person name="Almeida N.F."/>
            <person name="Balasubramanian D."/>
            <person name="Cromes L."/>
            <person name="Curatti L."/>
            <person name="Du Z."/>
            <person name="Godsy E."/>
            <person name="Goodner B."/>
            <person name="Hellner-Burris K."/>
            <person name="Hernandez J.A."/>
            <person name="Houmiel K."/>
            <person name="Imperial J."/>
            <person name="Kennedy C."/>
            <person name="Larson T.J."/>
            <person name="Latreille P."/>
            <person name="Ligon L.S."/>
            <person name="Lu J."/>
            <person name="Maerk M."/>
            <person name="Miller N.M."/>
            <person name="Norton S."/>
            <person name="O'Carroll I.P."/>
            <person name="Paulsen I."/>
            <person name="Raulfs E.C."/>
            <person name="Roemer R."/>
            <person name="Rosser J."/>
            <person name="Segura D."/>
            <person name="Slater S."/>
            <person name="Stricklin S.L."/>
            <person name="Studholme D.J."/>
            <person name="Sun J."/>
            <person name="Viana C.J."/>
            <person name="Wallin E."/>
            <person name="Wang B."/>
            <person name="Wheeler C."/>
            <person name="Zhu H."/>
            <person name="Dean D.R."/>
            <person name="Dixon R."/>
            <person name="Wood D."/>
        </authorList>
    </citation>
    <scope>NUCLEOTIDE SEQUENCE [LARGE SCALE GENOMIC DNA]</scope>
    <source>
        <strain>DJ / ATCC BAA-1303</strain>
    </source>
</reference>
<name>KDGD_AZOVD</name>
<evidence type="ECO:0000255" key="1">
    <source>
        <dbReference type="HAMAP-Rule" id="MF_00694"/>
    </source>
</evidence>
<sequence>MTPQELKSILSSGLLSFPVTDFDAAGDFDAESYARRLEWLAPYGASALFAAGGTGEFFSLGLDEYPRIIKTAVDTCAGSVPILAGVGGPTRQAIHMAQEAERLGAKGLLLLPHYLTEASQEGVAAHVEAVCRAVKIGVVVYNRNVCRLTPALLEQLAERCPNLVGYKDGLGEIELMVSVRHRLGERFAYLGGLPTAEVYAAAYKALGVPVYSSAVFNFIPRTAMEFYKAVAADDQVTVGRLIDDFFLPLLEIRNRRAGYAVSIVKAGVRVIGHDAGPVRAPLTDLLPDEYERLAALIRKLGPQ</sequence>
<gene>
    <name type="ordered locus">Avin_05220</name>
</gene>
<keyword id="KW-0456">Lyase</keyword>